<name>YQGF_SHIFL</name>
<evidence type="ECO:0000255" key="1">
    <source>
        <dbReference type="HAMAP-Rule" id="MF_00651"/>
    </source>
</evidence>
<organism>
    <name type="scientific">Shigella flexneri</name>
    <dbReference type="NCBI Taxonomy" id="623"/>
    <lineage>
        <taxon>Bacteria</taxon>
        <taxon>Pseudomonadati</taxon>
        <taxon>Pseudomonadota</taxon>
        <taxon>Gammaproteobacteria</taxon>
        <taxon>Enterobacterales</taxon>
        <taxon>Enterobacteriaceae</taxon>
        <taxon>Shigella</taxon>
    </lineage>
</organism>
<feature type="chain" id="PRO_0000172135" description="Putative pre-16S rRNA nuclease">
    <location>
        <begin position="1"/>
        <end position="138"/>
    </location>
</feature>
<reference key="1">
    <citation type="journal article" date="2002" name="Nucleic Acids Res.">
        <title>Genome sequence of Shigella flexneri 2a: insights into pathogenicity through comparison with genomes of Escherichia coli K12 and O157.</title>
        <authorList>
            <person name="Jin Q."/>
            <person name="Yuan Z."/>
            <person name="Xu J."/>
            <person name="Wang Y."/>
            <person name="Shen Y."/>
            <person name="Lu W."/>
            <person name="Wang J."/>
            <person name="Liu H."/>
            <person name="Yang J."/>
            <person name="Yang F."/>
            <person name="Zhang X."/>
            <person name="Zhang J."/>
            <person name="Yang G."/>
            <person name="Wu H."/>
            <person name="Qu D."/>
            <person name="Dong J."/>
            <person name="Sun L."/>
            <person name="Xue Y."/>
            <person name="Zhao A."/>
            <person name="Gao Y."/>
            <person name="Zhu J."/>
            <person name="Kan B."/>
            <person name="Ding K."/>
            <person name="Chen S."/>
            <person name="Cheng H."/>
            <person name="Yao Z."/>
            <person name="He B."/>
            <person name="Chen R."/>
            <person name="Ma D."/>
            <person name="Qiang B."/>
            <person name="Wen Y."/>
            <person name="Hou Y."/>
            <person name="Yu J."/>
        </authorList>
    </citation>
    <scope>NUCLEOTIDE SEQUENCE [LARGE SCALE GENOMIC DNA]</scope>
    <source>
        <strain>301 / Serotype 2a</strain>
    </source>
</reference>
<reference key="2">
    <citation type="journal article" date="2003" name="Infect. Immun.">
        <title>Complete genome sequence and comparative genomics of Shigella flexneri serotype 2a strain 2457T.</title>
        <authorList>
            <person name="Wei J."/>
            <person name="Goldberg M.B."/>
            <person name="Burland V."/>
            <person name="Venkatesan M.M."/>
            <person name="Deng W."/>
            <person name="Fournier G."/>
            <person name="Mayhew G.F."/>
            <person name="Plunkett G. III"/>
            <person name="Rose D.J."/>
            <person name="Darling A."/>
            <person name="Mau B."/>
            <person name="Perna N.T."/>
            <person name="Payne S.M."/>
            <person name="Runyen-Janecky L.J."/>
            <person name="Zhou S."/>
            <person name="Schwartz D.C."/>
            <person name="Blattner F.R."/>
        </authorList>
    </citation>
    <scope>NUCLEOTIDE SEQUENCE [LARGE SCALE GENOMIC DNA]</scope>
    <source>
        <strain>ATCC 700930 / 2457T / Serotype 2a</strain>
    </source>
</reference>
<accession>Q83JS4</accession>
<accession>Q7C028</accession>
<keyword id="KW-0963">Cytoplasm</keyword>
<keyword id="KW-0378">Hydrolase</keyword>
<keyword id="KW-0540">Nuclease</keyword>
<keyword id="KW-1185">Reference proteome</keyword>
<keyword id="KW-0690">Ribosome biogenesis</keyword>
<comment type="function">
    <text evidence="1">Could be a nuclease involved in processing of the 5'-end of pre-16S rRNA.</text>
</comment>
<comment type="subcellular location">
    <subcellularLocation>
        <location evidence="1">Cytoplasm</location>
    </subcellularLocation>
</comment>
<comment type="similarity">
    <text evidence="1">Belongs to the YqgF nuclease family.</text>
</comment>
<sequence length="138" mass="15186">MSGTLLAFDFGTKSIGVAVGQRITGTARPLPAIKAQDGTPDWNLIERLLKEWQPDEIIVGLPLNMDGTEQPLTARARKFANRIHGRFGVEVKLHDERLSTVEARSGLFEQGGYRALNKGKVDSASAVIILESYFEQGY</sequence>
<proteinExistence type="inferred from homology"/>
<dbReference type="EC" id="3.1.-.-" evidence="1"/>
<dbReference type="EMBL" id="AE005674">
    <property type="protein sequence ID" value="AAN44421.1"/>
    <property type="molecule type" value="Genomic_DNA"/>
</dbReference>
<dbReference type="EMBL" id="AE014073">
    <property type="protein sequence ID" value="AAP18246.1"/>
    <property type="molecule type" value="Genomic_DNA"/>
</dbReference>
<dbReference type="RefSeq" id="NP_708714.1">
    <property type="nucleotide sequence ID" value="NC_004337.2"/>
</dbReference>
<dbReference type="SMR" id="Q83JS4"/>
<dbReference type="STRING" id="198214.SF2940"/>
<dbReference type="PaxDb" id="198214-SF2940"/>
<dbReference type="GeneID" id="1025943"/>
<dbReference type="KEGG" id="sfl:SF2940"/>
<dbReference type="KEGG" id="sfx:S3144"/>
<dbReference type="PATRIC" id="fig|198214.7.peg.3497"/>
<dbReference type="HOGENOM" id="CLU_098240_3_0_6"/>
<dbReference type="Proteomes" id="UP000001006">
    <property type="component" value="Chromosome"/>
</dbReference>
<dbReference type="Proteomes" id="UP000002673">
    <property type="component" value="Chromosome"/>
</dbReference>
<dbReference type="GO" id="GO:0005829">
    <property type="term" value="C:cytosol"/>
    <property type="evidence" value="ECO:0007669"/>
    <property type="project" value="TreeGrafter"/>
</dbReference>
<dbReference type="GO" id="GO:0004518">
    <property type="term" value="F:nuclease activity"/>
    <property type="evidence" value="ECO:0007669"/>
    <property type="project" value="UniProtKB-KW"/>
</dbReference>
<dbReference type="GO" id="GO:0000967">
    <property type="term" value="P:rRNA 5'-end processing"/>
    <property type="evidence" value="ECO:0007669"/>
    <property type="project" value="UniProtKB-UniRule"/>
</dbReference>
<dbReference type="CDD" id="cd16964">
    <property type="entry name" value="YqgF"/>
    <property type="match status" value="1"/>
</dbReference>
<dbReference type="FunFam" id="3.30.420.140:FF:000002">
    <property type="entry name" value="Putative pre-16S rRNA nuclease"/>
    <property type="match status" value="1"/>
</dbReference>
<dbReference type="Gene3D" id="3.30.420.140">
    <property type="entry name" value="YqgF/RNase H-like domain"/>
    <property type="match status" value="1"/>
</dbReference>
<dbReference type="HAMAP" id="MF_00651">
    <property type="entry name" value="Nuclease_YqgF"/>
    <property type="match status" value="1"/>
</dbReference>
<dbReference type="InterPro" id="IPR012337">
    <property type="entry name" value="RNaseH-like_sf"/>
</dbReference>
<dbReference type="InterPro" id="IPR005227">
    <property type="entry name" value="YqgF"/>
</dbReference>
<dbReference type="InterPro" id="IPR006641">
    <property type="entry name" value="YqgF/RNaseH-like_dom"/>
</dbReference>
<dbReference type="InterPro" id="IPR037027">
    <property type="entry name" value="YqgF/RNaseH-like_dom_sf"/>
</dbReference>
<dbReference type="NCBIfam" id="TIGR00250">
    <property type="entry name" value="RNAse_H_YqgF"/>
    <property type="match status" value="1"/>
</dbReference>
<dbReference type="PANTHER" id="PTHR33317">
    <property type="entry name" value="POLYNUCLEOTIDYL TRANSFERASE, RIBONUCLEASE H-LIKE SUPERFAMILY PROTEIN"/>
    <property type="match status" value="1"/>
</dbReference>
<dbReference type="PANTHER" id="PTHR33317:SF4">
    <property type="entry name" value="POLYNUCLEOTIDYL TRANSFERASE, RIBONUCLEASE H-LIKE SUPERFAMILY PROTEIN"/>
    <property type="match status" value="1"/>
</dbReference>
<dbReference type="Pfam" id="PF03652">
    <property type="entry name" value="RuvX"/>
    <property type="match status" value="1"/>
</dbReference>
<dbReference type="SMART" id="SM00732">
    <property type="entry name" value="YqgFc"/>
    <property type="match status" value="1"/>
</dbReference>
<dbReference type="SUPFAM" id="SSF53098">
    <property type="entry name" value="Ribonuclease H-like"/>
    <property type="match status" value="1"/>
</dbReference>
<gene>
    <name evidence="1" type="primary">yqgF</name>
    <name type="ordered locus">SF2940</name>
    <name type="ordered locus">S3144</name>
</gene>
<protein>
    <recommendedName>
        <fullName evidence="1">Putative pre-16S rRNA nuclease</fullName>
        <ecNumber evidence="1">3.1.-.-</ecNumber>
    </recommendedName>
</protein>